<dbReference type="EMBL" id="CP000720">
    <property type="protein sequence ID" value="ABS46064.1"/>
    <property type="molecule type" value="Genomic_DNA"/>
</dbReference>
<dbReference type="RefSeq" id="WP_002213332.1">
    <property type="nucleotide sequence ID" value="NC_009708.1"/>
</dbReference>
<dbReference type="SMR" id="A7FNM0"/>
<dbReference type="GeneID" id="96663182"/>
<dbReference type="KEGG" id="ypi:YpsIP31758_3900"/>
<dbReference type="HOGENOM" id="CLU_098428_0_0_6"/>
<dbReference type="Proteomes" id="UP000002412">
    <property type="component" value="Chromosome"/>
</dbReference>
<dbReference type="GO" id="GO:1990904">
    <property type="term" value="C:ribonucleoprotein complex"/>
    <property type="evidence" value="ECO:0007669"/>
    <property type="project" value="UniProtKB-KW"/>
</dbReference>
<dbReference type="GO" id="GO:0005840">
    <property type="term" value="C:ribosome"/>
    <property type="evidence" value="ECO:0007669"/>
    <property type="project" value="UniProtKB-KW"/>
</dbReference>
<dbReference type="GO" id="GO:0019843">
    <property type="term" value="F:rRNA binding"/>
    <property type="evidence" value="ECO:0007669"/>
    <property type="project" value="UniProtKB-UniRule"/>
</dbReference>
<dbReference type="GO" id="GO:0003735">
    <property type="term" value="F:structural constituent of ribosome"/>
    <property type="evidence" value="ECO:0007669"/>
    <property type="project" value="InterPro"/>
</dbReference>
<dbReference type="GO" id="GO:0006412">
    <property type="term" value="P:translation"/>
    <property type="evidence" value="ECO:0007669"/>
    <property type="project" value="UniProtKB-UniRule"/>
</dbReference>
<dbReference type="FunFam" id="3.30.1370.30:FF:000003">
    <property type="entry name" value="30S ribosomal protein S8"/>
    <property type="match status" value="1"/>
</dbReference>
<dbReference type="FunFam" id="3.30.1490.10:FF:000001">
    <property type="entry name" value="30S ribosomal protein S8"/>
    <property type="match status" value="1"/>
</dbReference>
<dbReference type="Gene3D" id="3.30.1370.30">
    <property type="match status" value="1"/>
</dbReference>
<dbReference type="Gene3D" id="3.30.1490.10">
    <property type="match status" value="1"/>
</dbReference>
<dbReference type="HAMAP" id="MF_01302_B">
    <property type="entry name" value="Ribosomal_uS8_B"/>
    <property type="match status" value="1"/>
</dbReference>
<dbReference type="InterPro" id="IPR000630">
    <property type="entry name" value="Ribosomal_uS8"/>
</dbReference>
<dbReference type="InterPro" id="IPR047863">
    <property type="entry name" value="Ribosomal_uS8_CS"/>
</dbReference>
<dbReference type="InterPro" id="IPR035987">
    <property type="entry name" value="Ribosomal_uS8_sf"/>
</dbReference>
<dbReference type="NCBIfam" id="NF001109">
    <property type="entry name" value="PRK00136.1"/>
    <property type="match status" value="1"/>
</dbReference>
<dbReference type="PANTHER" id="PTHR11758">
    <property type="entry name" value="40S RIBOSOMAL PROTEIN S15A"/>
    <property type="match status" value="1"/>
</dbReference>
<dbReference type="Pfam" id="PF00410">
    <property type="entry name" value="Ribosomal_S8"/>
    <property type="match status" value="1"/>
</dbReference>
<dbReference type="SUPFAM" id="SSF56047">
    <property type="entry name" value="Ribosomal protein S8"/>
    <property type="match status" value="1"/>
</dbReference>
<dbReference type="PROSITE" id="PS00053">
    <property type="entry name" value="RIBOSOMAL_S8"/>
    <property type="match status" value="1"/>
</dbReference>
<reference key="1">
    <citation type="journal article" date="2007" name="PLoS Genet.">
        <title>The complete genome sequence of Yersinia pseudotuberculosis IP31758, the causative agent of Far East scarlet-like fever.</title>
        <authorList>
            <person name="Eppinger M."/>
            <person name="Rosovitz M.J."/>
            <person name="Fricke W.F."/>
            <person name="Rasko D.A."/>
            <person name="Kokorina G."/>
            <person name="Fayolle C."/>
            <person name="Lindler L.E."/>
            <person name="Carniel E."/>
            <person name="Ravel J."/>
        </authorList>
    </citation>
    <scope>NUCLEOTIDE SEQUENCE [LARGE SCALE GENOMIC DNA]</scope>
    <source>
        <strain>IP 31758</strain>
    </source>
</reference>
<sequence length="130" mass="14109">MSMQDPIADMLTRIRNGQAANKVAVTMPSSKLKVAIANVLKEEGFIEDFKIEGDTKPVLELALKYFQGKAVVESIQRISRPGLRIYKKKDELPKVMAGLGIAVISTSKGVMTDRAARQAGLGGEIICYVA</sequence>
<keyword id="KW-0687">Ribonucleoprotein</keyword>
<keyword id="KW-0689">Ribosomal protein</keyword>
<keyword id="KW-0694">RNA-binding</keyword>
<keyword id="KW-0699">rRNA-binding</keyword>
<organism>
    <name type="scientific">Yersinia pseudotuberculosis serotype O:1b (strain IP 31758)</name>
    <dbReference type="NCBI Taxonomy" id="349747"/>
    <lineage>
        <taxon>Bacteria</taxon>
        <taxon>Pseudomonadati</taxon>
        <taxon>Pseudomonadota</taxon>
        <taxon>Gammaproteobacteria</taxon>
        <taxon>Enterobacterales</taxon>
        <taxon>Yersiniaceae</taxon>
        <taxon>Yersinia</taxon>
    </lineage>
</organism>
<proteinExistence type="inferred from homology"/>
<feature type="chain" id="PRO_1000067493" description="Small ribosomal subunit protein uS8">
    <location>
        <begin position="1"/>
        <end position="130"/>
    </location>
</feature>
<gene>
    <name evidence="1" type="primary">rpsH</name>
    <name type="ordered locus">YpsIP31758_3900</name>
</gene>
<accession>A7FNM0</accession>
<evidence type="ECO:0000255" key="1">
    <source>
        <dbReference type="HAMAP-Rule" id="MF_01302"/>
    </source>
</evidence>
<evidence type="ECO:0000305" key="2"/>
<protein>
    <recommendedName>
        <fullName evidence="1">Small ribosomal subunit protein uS8</fullName>
    </recommendedName>
    <alternativeName>
        <fullName evidence="2">30S ribosomal protein S8</fullName>
    </alternativeName>
</protein>
<name>RS8_YERP3</name>
<comment type="function">
    <text evidence="1">One of the primary rRNA binding proteins, it binds directly to 16S rRNA central domain where it helps coordinate assembly of the platform of the 30S subunit.</text>
</comment>
<comment type="subunit">
    <text evidence="1">Part of the 30S ribosomal subunit. Contacts proteins S5 and S12.</text>
</comment>
<comment type="similarity">
    <text evidence="1">Belongs to the universal ribosomal protein uS8 family.</text>
</comment>